<organism>
    <name type="scientific">Oleidesulfovibrio alaskensis (strain ATCC BAA-1058 / DSM 17464 / G20)</name>
    <name type="common">Desulfovibrio alaskensis</name>
    <dbReference type="NCBI Taxonomy" id="207559"/>
    <lineage>
        <taxon>Bacteria</taxon>
        <taxon>Pseudomonadati</taxon>
        <taxon>Thermodesulfobacteriota</taxon>
        <taxon>Desulfovibrionia</taxon>
        <taxon>Desulfovibrionales</taxon>
        <taxon>Desulfovibrionaceae</taxon>
        <taxon>Oleidesulfovibrio</taxon>
    </lineage>
</organism>
<reference key="1">
    <citation type="journal article" date="2011" name="J. Bacteriol.">
        <title>Complete genome sequence and updated annotation of Desulfovibrio alaskensis G20.</title>
        <authorList>
            <person name="Hauser L.J."/>
            <person name="Land M.L."/>
            <person name="Brown S.D."/>
            <person name="Larimer F."/>
            <person name="Keller K.L."/>
            <person name="Rapp-Giles B.J."/>
            <person name="Price M.N."/>
            <person name="Lin M."/>
            <person name="Bruce D.C."/>
            <person name="Detter J.C."/>
            <person name="Tapia R."/>
            <person name="Han C.S."/>
            <person name="Goodwin L.A."/>
            <person name="Cheng J.F."/>
            <person name="Pitluck S."/>
            <person name="Copeland A."/>
            <person name="Lucas S."/>
            <person name="Nolan M."/>
            <person name="Lapidus A.L."/>
            <person name="Palumbo A.V."/>
            <person name="Wall J.D."/>
        </authorList>
    </citation>
    <scope>NUCLEOTIDE SEQUENCE [LARGE SCALE GENOMIC DNA]</scope>
    <source>
        <strain>ATCC BAA-1058 / DSM 17464 / G20</strain>
    </source>
</reference>
<feature type="chain" id="PRO_0000242555" description="UDP-N-acetylmuramate--L-alanine ligase">
    <location>
        <begin position="1"/>
        <end position="454"/>
    </location>
</feature>
<feature type="binding site" evidence="1">
    <location>
        <begin position="112"/>
        <end position="118"/>
    </location>
    <ligand>
        <name>ATP</name>
        <dbReference type="ChEBI" id="CHEBI:30616"/>
    </ligand>
</feature>
<gene>
    <name evidence="1" type="primary">murC</name>
    <name type="ordered locus">Dde_1043</name>
</gene>
<comment type="function">
    <text evidence="1">Cell wall formation.</text>
</comment>
<comment type="catalytic activity">
    <reaction evidence="1">
        <text>UDP-N-acetyl-alpha-D-muramate + L-alanine + ATP = UDP-N-acetyl-alpha-D-muramoyl-L-alanine + ADP + phosphate + H(+)</text>
        <dbReference type="Rhea" id="RHEA:23372"/>
        <dbReference type="ChEBI" id="CHEBI:15378"/>
        <dbReference type="ChEBI" id="CHEBI:30616"/>
        <dbReference type="ChEBI" id="CHEBI:43474"/>
        <dbReference type="ChEBI" id="CHEBI:57972"/>
        <dbReference type="ChEBI" id="CHEBI:70757"/>
        <dbReference type="ChEBI" id="CHEBI:83898"/>
        <dbReference type="ChEBI" id="CHEBI:456216"/>
        <dbReference type="EC" id="6.3.2.8"/>
    </reaction>
</comment>
<comment type="pathway">
    <text evidence="1">Cell wall biogenesis; peptidoglycan biosynthesis.</text>
</comment>
<comment type="subcellular location">
    <subcellularLocation>
        <location evidence="1">Cytoplasm</location>
    </subcellularLocation>
</comment>
<comment type="similarity">
    <text evidence="1">Belongs to the MurCDEF family.</text>
</comment>
<proteinExistence type="inferred from homology"/>
<sequence>MIGKVFRIHMVGIGGTGMCGIAEVLLNLGFEVRGSDMNDSPSVRRLRRLGADIFIGHGAENVTDAQVLVKSTAVSMDNPEVQAAQEKGIPIIPRAEMLAELMRLRKGIAIAGTHGKTTTTSLTAAIFDEAGTDPTVIIGGRLNAYGSNARLGEGEFLLAEADESDGSFLCLSPVVNVVTNVDLDHVDFYHDQQAIDTAFINFMNKVPFYGMNVVCGDDAGVRRLLPQIKRPVLTYGFGPDNQLRAETVTCGETSRFRVLLHGEDLGEVNLVQPGRHNVLNALAAIGVGLETGIAADVCLRGLANFRGVGRRFERKGERGGVLVVDDYGHHPAEIAATLATARTCYPGRRLVVAFQPHRFSRTKALFGDFCKAFDNVDKLLLTEIYPASEAPIPGVSGQSLAQGIRQVSNTDVDYFQDFDAMRAALPETLRPGDLFLTLGAGSIWTVGQFYLDGE</sequence>
<dbReference type="EC" id="6.3.2.8" evidence="1"/>
<dbReference type="EMBL" id="CP000112">
    <property type="protein sequence ID" value="ABB37844.1"/>
    <property type="molecule type" value="Genomic_DNA"/>
</dbReference>
<dbReference type="SMR" id="Q313Q2"/>
<dbReference type="STRING" id="207559.Dde_1043"/>
<dbReference type="KEGG" id="dde:Dde_1043"/>
<dbReference type="eggNOG" id="COG0773">
    <property type="taxonomic scope" value="Bacteria"/>
</dbReference>
<dbReference type="HOGENOM" id="CLU_028104_2_2_7"/>
<dbReference type="UniPathway" id="UPA00219"/>
<dbReference type="Proteomes" id="UP000002710">
    <property type="component" value="Chromosome"/>
</dbReference>
<dbReference type="GO" id="GO:0005737">
    <property type="term" value="C:cytoplasm"/>
    <property type="evidence" value="ECO:0007669"/>
    <property type="project" value="UniProtKB-SubCell"/>
</dbReference>
<dbReference type="GO" id="GO:0005524">
    <property type="term" value="F:ATP binding"/>
    <property type="evidence" value="ECO:0007669"/>
    <property type="project" value="UniProtKB-UniRule"/>
</dbReference>
<dbReference type="GO" id="GO:0008763">
    <property type="term" value="F:UDP-N-acetylmuramate-L-alanine ligase activity"/>
    <property type="evidence" value="ECO:0007669"/>
    <property type="project" value="UniProtKB-UniRule"/>
</dbReference>
<dbReference type="GO" id="GO:0051301">
    <property type="term" value="P:cell division"/>
    <property type="evidence" value="ECO:0007669"/>
    <property type="project" value="UniProtKB-KW"/>
</dbReference>
<dbReference type="GO" id="GO:0071555">
    <property type="term" value="P:cell wall organization"/>
    <property type="evidence" value="ECO:0007669"/>
    <property type="project" value="UniProtKB-KW"/>
</dbReference>
<dbReference type="GO" id="GO:0009252">
    <property type="term" value="P:peptidoglycan biosynthetic process"/>
    <property type="evidence" value="ECO:0007669"/>
    <property type="project" value="UniProtKB-UniRule"/>
</dbReference>
<dbReference type="GO" id="GO:0008360">
    <property type="term" value="P:regulation of cell shape"/>
    <property type="evidence" value="ECO:0007669"/>
    <property type="project" value="UniProtKB-KW"/>
</dbReference>
<dbReference type="Gene3D" id="3.90.190.20">
    <property type="entry name" value="Mur ligase, C-terminal domain"/>
    <property type="match status" value="1"/>
</dbReference>
<dbReference type="Gene3D" id="3.40.1190.10">
    <property type="entry name" value="Mur-like, catalytic domain"/>
    <property type="match status" value="1"/>
</dbReference>
<dbReference type="Gene3D" id="3.40.50.720">
    <property type="entry name" value="NAD(P)-binding Rossmann-like Domain"/>
    <property type="match status" value="1"/>
</dbReference>
<dbReference type="HAMAP" id="MF_00046">
    <property type="entry name" value="MurC"/>
    <property type="match status" value="1"/>
</dbReference>
<dbReference type="InterPro" id="IPR036565">
    <property type="entry name" value="Mur-like_cat_sf"/>
</dbReference>
<dbReference type="InterPro" id="IPR004101">
    <property type="entry name" value="Mur_ligase_C"/>
</dbReference>
<dbReference type="InterPro" id="IPR036615">
    <property type="entry name" value="Mur_ligase_C_dom_sf"/>
</dbReference>
<dbReference type="InterPro" id="IPR013221">
    <property type="entry name" value="Mur_ligase_cen"/>
</dbReference>
<dbReference type="InterPro" id="IPR000713">
    <property type="entry name" value="Mur_ligase_N"/>
</dbReference>
<dbReference type="InterPro" id="IPR050061">
    <property type="entry name" value="MurCDEF_pg_biosynth"/>
</dbReference>
<dbReference type="InterPro" id="IPR005758">
    <property type="entry name" value="UDP-N-AcMur_Ala_ligase_MurC"/>
</dbReference>
<dbReference type="NCBIfam" id="TIGR01082">
    <property type="entry name" value="murC"/>
    <property type="match status" value="1"/>
</dbReference>
<dbReference type="PANTHER" id="PTHR43445:SF3">
    <property type="entry name" value="UDP-N-ACETYLMURAMATE--L-ALANINE LIGASE"/>
    <property type="match status" value="1"/>
</dbReference>
<dbReference type="PANTHER" id="PTHR43445">
    <property type="entry name" value="UDP-N-ACETYLMURAMATE--L-ALANINE LIGASE-RELATED"/>
    <property type="match status" value="1"/>
</dbReference>
<dbReference type="Pfam" id="PF01225">
    <property type="entry name" value="Mur_ligase"/>
    <property type="match status" value="1"/>
</dbReference>
<dbReference type="Pfam" id="PF02875">
    <property type="entry name" value="Mur_ligase_C"/>
    <property type="match status" value="1"/>
</dbReference>
<dbReference type="Pfam" id="PF08245">
    <property type="entry name" value="Mur_ligase_M"/>
    <property type="match status" value="1"/>
</dbReference>
<dbReference type="SUPFAM" id="SSF51984">
    <property type="entry name" value="MurCD N-terminal domain"/>
    <property type="match status" value="1"/>
</dbReference>
<dbReference type="SUPFAM" id="SSF53623">
    <property type="entry name" value="MurD-like peptide ligases, catalytic domain"/>
    <property type="match status" value="1"/>
</dbReference>
<dbReference type="SUPFAM" id="SSF53244">
    <property type="entry name" value="MurD-like peptide ligases, peptide-binding domain"/>
    <property type="match status" value="1"/>
</dbReference>
<protein>
    <recommendedName>
        <fullName evidence="1">UDP-N-acetylmuramate--L-alanine ligase</fullName>
        <ecNumber evidence="1">6.3.2.8</ecNumber>
    </recommendedName>
    <alternativeName>
        <fullName evidence="1">UDP-N-acetylmuramoyl-L-alanine synthetase</fullName>
    </alternativeName>
</protein>
<evidence type="ECO:0000255" key="1">
    <source>
        <dbReference type="HAMAP-Rule" id="MF_00046"/>
    </source>
</evidence>
<keyword id="KW-0067">ATP-binding</keyword>
<keyword id="KW-0131">Cell cycle</keyword>
<keyword id="KW-0132">Cell division</keyword>
<keyword id="KW-0133">Cell shape</keyword>
<keyword id="KW-0961">Cell wall biogenesis/degradation</keyword>
<keyword id="KW-0963">Cytoplasm</keyword>
<keyword id="KW-0436">Ligase</keyword>
<keyword id="KW-0547">Nucleotide-binding</keyword>
<keyword id="KW-0573">Peptidoglycan synthesis</keyword>
<keyword id="KW-1185">Reference proteome</keyword>
<accession>Q313Q2</accession>
<name>MURC_OLEA2</name>